<evidence type="ECO:0000250" key="1"/>
<evidence type="ECO:0000255" key="2">
    <source>
        <dbReference type="HAMAP-Rule" id="MF_03029"/>
    </source>
</evidence>
<evidence type="ECO:0000256" key="3">
    <source>
        <dbReference type="SAM" id="MobiDB-lite"/>
    </source>
</evidence>
<gene>
    <name evidence="2" type="primary">YTM1</name>
    <name type="ordered locus">CAGL0L10890g</name>
</gene>
<accession>Q6FKK3</accession>
<comment type="function">
    <text evidence="2">Component of the NOP7 complex, which is required for maturation of the 25S and 5.8S ribosomal RNAs and formation of the 60S ribosome.</text>
</comment>
<comment type="subunit">
    <text evidence="2">Component of the NOP7 complex, composed of ERB1, NOP7 and YTM1. The complex is held together by ERB1, which interacts with NOP7 via its N-terminal domain and with YTM1 via a high-affinity interaction between the seven-bladed beta-propeller domains of the 2 proteins. The NOP7 complex associates with the 66S pre-ribosome. Interacts (via UBL domain) with MDN1 (via VWFA/MIDAS domain).</text>
</comment>
<comment type="subcellular location">
    <subcellularLocation>
        <location evidence="2">Nucleus</location>
        <location evidence="2">Nucleolus</location>
    </subcellularLocation>
    <subcellularLocation>
        <location evidence="2">Nucleus</location>
        <location evidence="2">Nucleoplasm</location>
    </subcellularLocation>
</comment>
<comment type="similarity">
    <text evidence="2">Belongs to the WD repeat WDR12/YTM1 family.</text>
</comment>
<name>YTM1_CANGA</name>
<organism>
    <name type="scientific">Candida glabrata (strain ATCC 2001 / BCRC 20586 / JCM 3761 / NBRC 0622 / NRRL Y-65 / CBS 138)</name>
    <name type="common">Yeast</name>
    <name type="synonym">Nakaseomyces glabratus</name>
    <dbReference type="NCBI Taxonomy" id="284593"/>
    <lineage>
        <taxon>Eukaryota</taxon>
        <taxon>Fungi</taxon>
        <taxon>Dikarya</taxon>
        <taxon>Ascomycota</taxon>
        <taxon>Saccharomycotina</taxon>
        <taxon>Saccharomycetes</taxon>
        <taxon>Saccharomycetales</taxon>
        <taxon>Saccharomycetaceae</taxon>
        <taxon>Nakaseomyces</taxon>
    </lineage>
</organism>
<dbReference type="EMBL" id="CR380958">
    <property type="protein sequence ID" value="CAG62215.1"/>
    <property type="molecule type" value="Genomic_DNA"/>
</dbReference>
<dbReference type="RefSeq" id="XP_449241.1">
    <property type="nucleotide sequence ID" value="XM_449241.1"/>
</dbReference>
<dbReference type="SMR" id="Q6FKK3"/>
<dbReference type="FunCoup" id="Q6FKK3">
    <property type="interactions" value="1008"/>
</dbReference>
<dbReference type="STRING" id="284593.Q6FKK3"/>
<dbReference type="EnsemblFungi" id="CAGL0L10890g-T">
    <property type="protein sequence ID" value="CAGL0L10890g-T-p1"/>
    <property type="gene ID" value="CAGL0L10890g"/>
</dbReference>
<dbReference type="KEGG" id="cgr:2891016"/>
<dbReference type="CGD" id="CAL0135158">
    <property type="gene designation" value="CAGL0L10890g"/>
</dbReference>
<dbReference type="VEuPathDB" id="FungiDB:CAGL0L10890g"/>
<dbReference type="eggNOG" id="KOG0313">
    <property type="taxonomic scope" value="Eukaryota"/>
</dbReference>
<dbReference type="HOGENOM" id="CLU_000288_57_0_1"/>
<dbReference type="InParanoid" id="Q6FKK3"/>
<dbReference type="OMA" id="DHKYVEF"/>
<dbReference type="Proteomes" id="UP000002428">
    <property type="component" value="Chromosome L"/>
</dbReference>
<dbReference type="GO" id="GO:0005654">
    <property type="term" value="C:nucleoplasm"/>
    <property type="evidence" value="ECO:0007669"/>
    <property type="project" value="UniProtKB-SubCell"/>
</dbReference>
<dbReference type="GO" id="GO:0070545">
    <property type="term" value="C:PeBoW complex"/>
    <property type="evidence" value="ECO:0007669"/>
    <property type="project" value="EnsemblFungi"/>
</dbReference>
<dbReference type="GO" id="GO:0030687">
    <property type="term" value="C:preribosome, large subunit precursor"/>
    <property type="evidence" value="ECO:0007669"/>
    <property type="project" value="UniProtKB-UniRule"/>
</dbReference>
<dbReference type="GO" id="GO:0043021">
    <property type="term" value="F:ribonucleoprotein complex binding"/>
    <property type="evidence" value="ECO:0007669"/>
    <property type="project" value="UniProtKB-UniRule"/>
</dbReference>
<dbReference type="GO" id="GO:0051276">
    <property type="term" value="P:chromosome organization"/>
    <property type="evidence" value="ECO:0007669"/>
    <property type="project" value="EnsemblFungi"/>
</dbReference>
<dbReference type="GO" id="GO:0000466">
    <property type="term" value="P:maturation of 5.8S rRNA from tricistronic rRNA transcript (SSU-rRNA, 5.8S rRNA, LSU-rRNA)"/>
    <property type="evidence" value="ECO:0007669"/>
    <property type="project" value="UniProtKB-UniRule"/>
</dbReference>
<dbReference type="GO" id="GO:0000463">
    <property type="term" value="P:maturation of LSU-rRNA from tricistronic rRNA transcript (SSU-rRNA, 5.8S rRNA, LSU-rRNA)"/>
    <property type="evidence" value="ECO:0007669"/>
    <property type="project" value="UniProtKB-UniRule"/>
</dbReference>
<dbReference type="GO" id="GO:0110136">
    <property type="term" value="P:protein-RNA complex remodeling"/>
    <property type="evidence" value="ECO:0007669"/>
    <property type="project" value="EnsemblFungi"/>
</dbReference>
<dbReference type="CDD" id="cd00200">
    <property type="entry name" value="WD40"/>
    <property type="match status" value="1"/>
</dbReference>
<dbReference type="FunFam" id="2.130.10.10:FF:000706">
    <property type="entry name" value="Ribosome biogenesis protein YTM1"/>
    <property type="match status" value="1"/>
</dbReference>
<dbReference type="Gene3D" id="2.130.10.10">
    <property type="entry name" value="YVTN repeat-like/Quinoprotein amine dehydrogenase"/>
    <property type="match status" value="1"/>
</dbReference>
<dbReference type="HAMAP" id="MF_03029">
    <property type="entry name" value="WDR12"/>
    <property type="match status" value="1"/>
</dbReference>
<dbReference type="InterPro" id="IPR020472">
    <property type="entry name" value="G-protein_beta_WD-40_rep"/>
</dbReference>
<dbReference type="InterPro" id="IPR012972">
    <property type="entry name" value="NLE"/>
</dbReference>
<dbReference type="InterPro" id="IPR015943">
    <property type="entry name" value="WD40/YVTN_repeat-like_dom_sf"/>
</dbReference>
<dbReference type="InterPro" id="IPR019775">
    <property type="entry name" value="WD40_repeat_CS"/>
</dbReference>
<dbReference type="InterPro" id="IPR036322">
    <property type="entry name" value="WD40_repeat_dom_sf"/>
</dbReference>
<dbReference type="InterPro" id="IPR001680">
    <property type="entry name" value="WD40_rpt"/>
</dbReference>
<dbReference type="InterPro" id="IPR028599">
    <property type="entry name" value="WDR12/Ytm1"/>
</dbReference>
<dbReference type="PANTHER" id="PTHR19855:SF11">
    <property type="entry name" value="RIBOSOME BIOGENESIS PROTEIN WDR12"/>
    <property type="match status" value="1"/>
</dbReference>
<dbReference type="PANTHER" id="PTHR19855">
    <property type="entry name" value="WD40 REPEAT PROTEIN 12, 37"/>
    <property type="match status" value="1"/>
</dbReference>
<dbReference type="Pfam" id="PF08154">
    <property type="entry name" value="NLE"/>
    <property type="match status" value="1"/>
</dbReference>
<dbReference type="Pfam" id="PF00400">
    <property type="entry name" value="WD40"/>
    <property type="match status" value="5"/>
</dbReference>
<dbReference type="PRINTS" id="PR00320">
    <property type="entry name" value="GPROTEINBRPT"/>
</dbReference>
<dbReference type="SMART" id="SM00320">
    <property type="entry name" value="WD40"/>
    <property type="match status" value="7"/>
</dbReference>
<dbReference type="SUPFAM" id="SSF50978">
    <property type="entry name" value="WD40 repeat-like"/>
    <property type="match status" value="1"/>
</dbReference>
<dbReference type="PROSITE" id="PS00678">
    <property type="entry name" value="WD_REPEATS_1"/>
    <property type="match status" value="2"/>
</dbReference>
<dbReference type="PROSITE" id="PS50082">
    <property type="entry name" value="WD_REPEATS_2"/>
    <property type="match status" value="5"/>
</dbReference>
<dbReference type="PROSITE" id="PS50294">
    <property type="entry name" value="WD_REPEATS_REGION"/>
    <property type="match status" value="1"/>
</dbReference>
<feature type="chain" id="PRO_0000369582" description="Ribosome biogenesis protein YTM1">
    <location>
        <begin position="1"/>
        <end position="457"/>
    </location>
</feature>
<feature type="repeat" description="WD 1">
    <location>
        <begin position="101"/>
        <end position="140"/>
    </location>
</feature>
<feature type="repeat" description="WD 2">
    <location>
        <begin position="142"/>
        <end position="180"/>
    </location>
</feature>
<feature type="repeat" description="WD 3">
    <location>
        <begin position="203"/>
        <end position="241"/>
    </location>
</feature>
<feature type="repeat" description="WD 4">
    <location>
        <begin position="282"/>
        <end position="322"/>
    </location>
</feature>
<feature type="repeat" description="WD 5">
    <location>
        <begin position="324"/>
        <end position="363"/>
    </location>
</feature>
<feature type="repeat" description="WD 6">
    <location>
        <begin position="370"/>
        <end position="410"/>
    </location>
</feature>
<feature type="repeat" description="WD 7">
    <location>
        <begin position="421"/>
        <end position="457"/>
    </location>
</feature>
<feature type="region of interest" description="Ubiquitin-like (UBL) domain" evidence="2">
    <location>
        <begin position="8"/>
        <end position="89"/>
    </location>
</feature>
<feature type="region of interest" description="Sufficient for interaction with ERB1 and association with 66S pre-ribosomes" evidence="1">
    <location>
        <begin position="99"/>
        <end position="457"/>
    </location>
</feature>
<feature type="region of interest" description="Disordered" evidence="3">
    <location>
        <begin position="172"/>
        <end position="191"/>
    </location>
</feature>
<reference key="1">
    <citation type="journal article" date="2004" name="Nature">
        <title>Genome evolution in yeasts.</title>
        <authorList>
            <person name="Dujon B."/>
            <person name="Sherman D."/>
            <person name="Fischer G."/>
            <person name="Durrens P."/>
            <person name="Casaregola S."/>
            <person name="Lafontaine I."/>
            <person name="de Montigny J."/>
            <person name="Marck C."/>
            <person name="Neuveglise C."/>
            <person name="Talla E."/>
            <person name="Goffard N."/>
            <person name="Frangeul L."/>
            <person name="Aigle M."/>
            <person name="Anthouard V."/>
            <person name="Babour A."/>
            <person name="Barbe V."/>
            <person name="Barnay S."/>
            <person name="Blanchin S."/>
            <person name="Beckerich J.-M."/>
            <person name="Beyne E."/>
            <person name="Bleykasten C."/>
            <person name="Boisrame A."/>
            <person name="Boyer J."/>
            <person name="Cattolico L."/>
            <person name="Confanioleri F."/>
            <person name="de Daruvar A."/>
            <person name="Despons L."/>
            <person name="Fabre E."/>
            <person name="Fairhead C."/>
            <person name="Ferry-Dumazet H."/>
            <person name="Groppi A."/>
            <person name="Hantraye F."/>
            <person name="Hennequin C."/>
            <person name="Jauniaux N."/>
            <person name="Joyet P."/>
            <person name="Kachouri R."/>
            <person name="Kerrest A."/>
            <person name="Koszul R."/>
            <person name="Lemaire M."/>
            <person name="Lesur I."/>
            <person name="Ma L."/>
            <person name="Muller H."/>
            <person name="Nicaud J.-M."/>
            <person name="Nikolski M."/>
            <person name="Oztas S."/>
            <person name="Ozier-Kalogeropoulos O."/>
            <person name="Pellenz S."/>
            <person name="Potier S."/>
            <person name="Richard G.-F."/>
            <person name="Straub M.-L."/>
            <person name="Suleau A."/>
            <person name="Swennen D."/>
            <person name="Tekaia F."/>
            <person name="Wesolowski-Louvel M."/>
            <person name="Westhof E."/>
            <person name="Wirth B."/>
            <person name="Zeniou-Meyer M."/>
            <person name="Zivanovic Y."/>
            <person name="Bolotin-Fukuhara M."/>
            <person name="Thierry A."/>
            <person name="Bouchier C."/>
            <person name="Caudron B."/>
            <person name="Scarpelli C."/>
            <person name="Gaillardin C."/>
            <person name="Weissenbach J."/>
            <person name="Wincker P."/>
            <person name="Souciet J.-L."/>
        </authorList>
    </citation>
    <scope>NUCLEOTIDE SEQUENCE [LARGE SCALE GENOMIC DNA]</scope>
    <source>
        <strain>ATCC 2001 / BCRC 20586 / JCM 3761 / NBRC 0622 / NRRL Y-65 / CBS 138</strain>
    </source>
</reference>
<keyword id="KW-0539">Nucleus</keyword>
<keyword id="KW-1185">Reference proteome</keyword>
<keyword id="KW-0677">Repeat</keyword>
<keyword id="KW-0690">Ribosome biogenesis</keyword>
<keyword id="KW-0698">rRNA processing</keyword>
<keyword id="KW-0853">WD repeat</keyword>
<protein>
    <recommendedName>
        <fullName evidence="2">Ribosome biogenesis protein YTM1</fullName>
    </recommendedName>
</protein>
<sequence>MSTDTSQVKVKFFTREKDESLHVDDVPMYAPISLKRYGLSEIVNHLLESETPIPFDFLIDGELLRTSLQEYLTKKGLSSETTLTVEYTRAVLPPSFLANFNNDDWVSALDVSDDFRHIYSGSYDGVVRTWNMSGKVEKQYSGHTGAVKAVKYISNTRIVSAGNDRSLRLWKTKNDDGSVSNNTGDENDEENIEDGKTLAILEGHKAPVVSLDVASNSRILSASYDNTVALWSTIYKEMTAIDHLEEIQNPNNKISTAAKKRRKLTLKDGTIRRRAPLSLLESHTGPVEQVIFDHGDNTVGYSVSQDHTIKTWDLVTARCIDTKTTSYPLLSIAQMPTLNLLACGSSVRHITLHDPRVSSSAKITQKQLVGHKNFVVGLDTCSENEYLLCSASHDGTVKVWDVRSTSPMYTITRQDPTVEKGVNDKVFAVKWAKSIGIISGGQDKKIQINKGDNIFKN</sequence>
<proteinExistence type="inferred from homology"/>